<name>DPO3_STAA1</name>
<organism>
    <name type="scientific">Staphylococcus aureus (strain Mu3 / ATCC 700698)</name>
    <dbReference type="NCBI Taxonomy" id="418127"/>
    <lineage>
        <taxon>Bacteria</taxon>
        <taxon>Bacillati</taxon>
        <taxon>Bacillota</taxon>
        <taxon>Bacilli</taxon>
        <taxon>Bacillales</taxon>
        <taxon>Staphylococcaceae</taxon>
        <taxon>Staphylococcus</taxon>
    </lineage>
</organism>
<sequence length="1438" mass="162693">MAMTEQQKFKVLADQIKISNQLDAEILNSGELTRIDVSNKNRTWEFHITLPQFLAHEDYLLFINAIEQEFKDIANVTCRFTVTNGTNQDEHAIKYFGHCIDQTALSPKVKGQLKQKKLIMSGKVLKVMVSNDIERNHFDKACNGSLIKAFRNCGFDIDKIIFETNDNDQEQNLASLEAHIQEEDEQSARLATEKLEKMKAEKAKQQDNNESAVDKCQIGKPIQIENIKPIESIIEEEFKVAIEGVIFDINLKELKSGRHIVEIKVTDYTDSLVLKMFTRKNKDDLEHFKALSVGKWVRAQGRIEEDTFIRDLVMMMSDIEEIKKATKKDKAEEKRVEFHLHTAMSQMDGIPNIGAYVKQAADWGHPAIAVTDHNVVQAFPDAHAAAEKHGIKMIYGMEGMLVDDGVPIAYKPQDVVLKDATYVVFDVETTGLSNQYDKIIELAAVKVHNGEIIDKFERFSNPHERLSETIINLTHITDDMLVDAPEIEEVLTEFKEWVGDAIFVAHNASFDMGFIDTGYERLGFGPSTNGVIDTLELSRTINTEYGKHGLNFLAKKYGVELTQHHRAIYDTEATAYIFIKMVQQMKELGVLNHNEINKKLSNEDAYKRARPSHVTLIVQNQQGLKNLFKIVSASLVKYFYRTPRIPRSLLDEYREGLLVGTACDEGELFTAVMQKDQSQVEKIAKYYDFIEIQPPALYQDLIDRELIRDTETLHEIYQRLIHAGDTAGIPVIATGNAHYLFEHDGIARKILIASQPGNPLNRSTLPEAHFRTTDEMLNEFHFLGEEKAHEIVVKNTNELADRIERVVPIKDELYTPRMEGANEEIRELSYTNARKLYGEDLPQIVIDRLEKELKSIIGNGFAVIYLISQRLVKKSLDDGYLVGSRGSVGSSFVATMTEITEVNPLPPHYICPNCKTSEFFNDGSVGSGFDLPDKTCETCGAPLIKEGQDIPFETFLGFKGDKVPDIDLNFSGEYQPNAHNYTKVLFGEDKVFRAGTIGTVAEKTAFGYVKGYLNDQGIHKRGAEIDRLVKGCTGVKRTTGQHPGGIIVVPDYMDIYDFTPIQYPADDQNSAWMTTHFDFHSIHDNVLKLDILGHDDPTMIRMLQDLSGIDPKTIPVDDKEVMQIFSTPESLGVTEDEILCKTGTFGVPEFGTGFVRQMLEDTKPTTFSELVQISGLSHGTDVWLGNAQELIKTGICDLSSVIGCRDDIMVYLMYAGLEPSMAFKIMESVRKGKGLTEEMIETMKENEVPDWYLDSCLKIKYMFPKAHAAAYVLMAVRIAYFKVHHPLYYYASYFTIRASDFDLITMIKDKTSIRNTVKDMYSRYMDLGKKEKDVLTVLEIMNEMAHRGYRMQPISLEKSQAFEFIIEGDTLIPPFISVPGLGENVAKRIVEARDDGPFLSKEDLNKKAGLSQKIIEYLDELGSLPNLPDKAQLSIFDM</sequence>
<dbReference type="EC" id="2.7.7.7" evidence="1"/>
<dbReference type="EMBL" id="AP009324">
    <property type="protein sequence ID" value="BAF78137.1"/>
    <property type="molecule type" value="Genomic_DNA"/>
</dbReference>
<dbReference type="SMR" id="A7X1P4"/>
<dbReference type="KEGG" id="saw:SAHV_1254"/>
<dbReference type="HOGENOM" id="CLU_003297_2_0_9"/>
<dbReference type="GO" id="GO:0005737">
    <property type="term" value="C:cytoplasm"/>
    <property type="evidence" value="ECO:0007669"/>
    <property type="project" value="UniProtKB-SubCell"/>
</dbReference>
<dbReference type="GO" id="GO:0008408">
    <property type="term" value="F:3'-5' exonuclease activity"/>
    <property type="evidence" value="ECO:0007669"/>
    <property type="project" value="UniProtKB-UniRule"/>
</dbReference>
<dbReference type="GO" id="GO:0003677">
    <property type="term" value="F:DNA binding"/>
    <property type="evidence" value="ECO:0007669"/>
    <property type="project" value="UniProtKB-UniRule"/>
</dbReference>
<dbReference type="GO" id="GO:0003887">
    <property type="term" value="F:DNA-directed DNA polymerase activity"/>
    <property type="evidence" value="ECO:0007669"/>
    <property type="project" value="UniProtKB-UniRule"/>
</dbReference>
<dbReference type="GO" id="GO:0006261">
    <property type="term" value="P:DNA-templated DNA replication"/>
    <property type="evidence" value="ECO:0007669"/>
    <property type="project" value="UniProtKB-UniRule"/>
</dbReference>
<dbReference type="CDD" id="cd06127">
    <property type="entry name" value="DEDDh"/>
    <property type="match status" value="1"/>
</dbReference>
<dbReference type="CDD" id="cd07435">
    <property type="entry name" value="PHP_PolIIIA_POLC"/>
    <property type="match status" value="1"/>
</dbReference>
<dbReference type="CDD" id="cd04484">
    <property type="entry name" value="polC_OBF"/>
    <property type="match status" value="1"/>
</dbReference>
<dbReference type="FunFam" id="3.30.420.10:FF:000045">
    <property type="entry name" value="3'-5' exonuclease DinG"/>
    <property type="match status" value="1"/>
</dbReference>
<dbReference type="Gene3D" id="1.10.150.870">
    <property type="match status" value="1"/>
</dbReference>
<dbReference type="Gene3D" id="3.30.1900.20">
    <property type="match status" value="2"/>
</dbReference>
<dbReference type="Gene3D" id="6.10.140.1510">
    <property type="match status" value="1"/>
</dbReference>
<dbReference type="Gene3D" id="3.20.20.140">
    <property type="entry name" value="Metal-dependent hydrolases"/>
    <property type="match status" value="1"/>
</dbReference>
<dbReference type="Gene3D" id="2.40.50.140">
    <property type="entry name" value="Nucleic acid-binding proteins"/>
    <property type="match status" value="1"/>
</dbReference>
<dbReference type="Gene3D" id="1.10.150.700">
    <property type="entry name" value="PolC, middle finger domain"/>
    <property type="match status" value="1"/>
</dbReference>
<dbReference type="Gene3D" id="3.30.420.10">
    <property type="entry name" value="Ribonuclease H-like superfamily/Ribonuclease H"/>
    <property type="match status" value="1"/>
</dbReference>
<dbReference type="HAMAP" id="MF_00356">
    <property type="entry name" value="DNApol_PolC"/>
    <property type="match status" value="1"/>
</dbReference>
<dbReference type="InterPro" id="IPR011708">
    <property type="entry name" value="DNA_pol3_alpha_NTPase_dom"/>
</dbReference>
<dbReference type="InterPro" id="IPR040982">
    <property type="entry name" value="DNA_pol3_finger"/>
</dbReference>
<dbReference type="InterPro" id="IPR024754">
    <property type="entry name" value="DNA_PolC-like_N_II"/>
</dbReference>
<dbReference type="InterPro" id="IPR028112">
    <property type="entry name" value="DNA_PolC-type_N_I"/>
</dbReference>
<dbReference type="InterPro" id="IPR004805">
    <property type="entry name" value="DnaE2/DnaE/PolC"/>
</dbReference>
<dbReference type="InterPro" id="IPR029460">
    <property type="entry name" value="DNAPol_HHH"/>
</dbReference>
<dbReference type="InterPro" id="IPR006054">
    <property type="entry name" value="DnaQ"/>
</dbReference>
<dbReference type="InterPro" id="IPR013520">
    <property type="entry name" value="Exonuclease_RNaseT/DNA_pol3"/>
</dbReference>
<dbReference type="InterPro" id="IPR012340">
    <property type="entry name" value="NA-bd_OB-fold"/>
</dbReference>
<dbReference type="InterPro" id="IPR004013">
    <property type="entry name" value="PHP_dom"/>
</dbReference>
<dbReference type="InterPro" id="IPR003141">
    <property type="entry name" value="Pol/His_phosphatase_N"/>
</dbReference>
<dbReference type="InterPro" id="IPR006308">
    <property type="entry name" value="Pol_III_a_PolC-type_gram_pos"/>
</dbReference>
<dbReference type="InterPro" id="IPR044923">
    <property type="entry name" value="PolC_middle_finger_sf"/>
</dbReference>
<dbReference type="InterPro" id="IPR012337">
    <property type="entry name" value="RNaseH-like_sf"/>
</dbReference>
<dbReference type="InterPro" id="IPR036397">
    <property type="entry name" value="RNaseH_sf"/>
</dbReference>
<dbReference type="NCBIfam" id="TIGR00573">
    <property type="entry name" value="dnaq"/>
    <property type="match status" value="1"/>
</dbReference>
<dbReference type="NCBIfam" id="TIGR01405">
    <property type="entry name" value="polC_Gram_pos"/>
    <property type="match status" value="1"/>
</dbReference>
<dbReference type="NCBIfam" id="NF001688">
    <property type="entry name" value="PRK00448.1"/>
    <property type="match status" value="1"/>
</dbReference>
<dbReference type="PANTHER" id="PTHR32294:SF5">
    <property type="entry name" value="DNA POLYMERASE III POLC-TYPE"/>
    <property type="match status" value="1"/>
</dbReference>
<dbReference type="PANTHER" id="PTHR32294">
    <property type="entry name" value="DNA POLYMERASE III SUBUNIT ALPHA"/>
    <property type="match status" value="1"/>
</dbReference>
<dbReference type="Pfam" id="PF14480">
    <property type="entry name" value="DNA_pol3_a_NI"/>
    <property type="match status" value="1"/>
</dbReference>
<dbReference type="Pfam" id="PF11490">
    <property type="entry name" value="DNA_pol3_a_NII"/>
    <property type="match status" value="1"/>
</dbReference>
<dbReference type="Pfam" id="PF07733">
    <property type="entry name" value="DNA_pol3_alpha"/>
    <property type="match status" value="2"/>
</dbReference>
<dbReference type="Pfam" id="PF17657">
    <property type="entry name" value="DNA_pol3_finger"/>
    <property type="match status" value="1"/>
</dbReference>
<dbReference type="Pfam" id="PF14579">
    <property type="entry name" value="HHH_6"/>
    <property type="match status" value="1"/>
</dbReference>
<dbReference type="Pfam" id="PF02811">
    <property type="entry name" value="PHP"/>
    <property type="match status" value="2"/>
</dbReference>
<dbReference type="Pfam" id="PF00929">
    <property type="entry name" value="RNase_T"/>
    <property type="match status" value="1"/>
</dbReference>
<dbReference type="SMART" id="SM00479">
    <property type="entry name" value="EXOIII"/>
    <property type="match status" value="1"/>
</dbReference>
<dbReference type="SMART" id="SM00481">
    <property type="entry name" value="POLIIIAc"/>
    <property type="match status" value="1"/>
</dbReference>
<dbReference type="SUPFAM" id="SSF81585">
    <property type="entry name" value="PsbU/PolX domain-like"/>
    <property type="match status" value="1"/>
</dbReference>
<dbReference type="SUPFAM" id="SSF53098">
    <property type="entry name" value="Ribonuclease H-like"/>
    <property type="match status" value="1"/>
</dbReference>
<protein>
    <recommendedName>
        <fullName evidence="1">DNA polymerase III PolC-type</fullName>
        <shortName evidence="1">PolIII</shortName>
        <ecNumber evidence="1">2.7.7.7</ecNumber>
    </recommendedName>
</protein>
<proteinExistence type="inferred from homology"/>
<reference key="1">
    <citation type="journal article" date="2008" name="Antimicrob. Agents Chemother.">
        <title>Mutated response regulator graR is responsible for phenotypic conversion of Staphylococcus aureus from heterogeneous vancomycin-intermediate resistance to vancomycin-intermediate resistance.</title>
        <authorList>
            <person name="Neoh H.-M."/>
            <person name="Cui L."/>
            <person name="Yuzawa H."/>
            <person name="Takeuchi F."/>
            <person name="Matsuo M."/>
            <person name="Hiramatsu K."/>
        </authorList>
    </citation>
    <scope>NUCLEOTIDE SEQUENCE [LARGE SCALE GENOMIC DNA]</scope>
    <source>
        <strain>Mu3 / ATCC 700698</strain>
    </source>
</reference>
<keyword id="KW-0963">Cytoplasm</keyword>
<keyword id="KW-0235">DNA replication</keyword>
<keyword id="KW-0239">DNA-directed DNA polymerase</keyword>
<keyword id="KW-0269">Exonuclease</keyword>
<keyword id="KW-0378">Hydrolase</keyword>
<keyword id="KW-0540">Nuclease</keyword>
<keyword id="KW-0548">Nucleotidyltransferase</keyword>
<keyword id="KW-0808">Transferase</keyword>
<gene>
    <name evidence="1" type="primary">polC</name>
    <name type="ordered locus">SAHV_1254</name>
</gene>
<comment type="function">
    <text evidence="1">Required for replicative DNA synthesis. This DNA polymerase also exhibits 3' to 5' exonuclease activity.</text>
</comment>
<comment type="catalytic activity">
    <reaction evidence="1">
        <text>DNA(n) + a 2'-deoxyribonucleoside 5'-triphosphate = DNA(n+1) + diphosphate</text>
        <dbReference type="Rhea" id="RHEA:22508"/>
        <dbReference type="Rhea" id="RHEA-COMP:17339"/>
        <dbReference type="Rhea" id="RHEA-COMP:17340"/>
        <dbReference type="ChEBI" id="CHEBI:33019"/>
        <dbReference type="ChEBI" id="CHEBI:61560"/>
        <dbReference type="ChEBI" id="CHEBI:173112"/>
        <dbReference type="EC" id="2.7.7.7"/>
    </reaction>
</comment>
<comment type="subcellular location">
    <subcellularLocation>
        <location evidence="1">Cytoplasm</location>
    </subcellularLocation>
</comment>
<comment type="similarity">
    <text evidence="1">Belongs to the DNA polymerase type-C family. PolC subfamily.</text>
</comment>
<accession>A7X1P4</accession>
<feature type="chain" id="PRO_1000048478" description="DNA polymerase III PolC-type">
    <location>
        <begin position="1"/>
        <end position="1438"/>
    </location>
</feature>
<feature type="domain" description="Exonuclease">
    <location>
        <begin position="422"/>
        <end position="578"/>
    </location>
</feature>
<evidence type="ECO:0000255" key="1">
    <source>
        <dbReference type="HAMAP-Rule" id="MF_00356"/>
    </source>
</evidence>